<accession>A7HT46</accession>
<gene>
    <name evidence="1" type="primary">tal</name>
    <name type="ordered locus">Plav_1459</name>
</gene>
<evidence type="ECO:0000255" key="1">
    <source>
        <dbReference type="HAMAP-Rule" id="MF_00494"/>
    </source>
</evidence>
<organism>
    <name type="scientific">Parvibaculum lavamentivorans (strain DS-1 / DSM 13023 / NCIMB 13966)</name>
    <dbReference type="NCBI Taxonomy" id="402881"/>
    <lineage>
        <taxon>Bacteria</taxon>
        <taxon>Pseudomonadati</taxon>
        <taxon>Pseudomonadota</taxon>
        <taxon>Alphaproteobacteria</taxon>
        <taxon>Hyphomicrobiales</taxon>
        <taxon>Parvibaculaceae</taxon>
        <taxon>Parvibaculum</taxon>
    </lineage>
</organism>
<keyword id="KW-0963">Cytoplasm</keyword>
<keyword id="KW-0570">Pentose shunt</keyword>
<keyword id="KW-1185">Reference proteome</keyword>
<keyword id="KW-0704">Schiff base</keyword>
<keyword id="KW-0808">Transferase</keyword>
<sequence>MKFFVDTADIAEIRELADTGLLDGVTTNPSLIAKSGRNFLEVVEEICGVVEGPVSAEVTALDAPTMIEEGRKLAKIAKNIAVKVPLTWDGLKTCKVLTGEGTMVNVTLCFSANQALLAAKAGATFISPFIGRLDDINLDGMELIHEIREIYDNYPALETEILAASIRSANHVKDAALAGADVATVPPAVLKGLAAHPLTDKGLEMFMADWKKTGQKIL</sequence>
<protein>
    <recommendedName>
        <fullName evidence="1">Probable transaldolase</fullName>
        <ecNumber evidence="1">2.2.1.2</ecNumber>
    </recommendedName>
</protein>
<comment type="function">
    <text evidence="1">Transaldolase is important for the balance of metabolites in the pentose-phosphate pathway.</text>
</comment>
<comment type="catalytic activity">
    <reaction evidence="1">
        <text>D-sedoheptulose 7-phosphate + D-glyceraldehyde 3-phosphate = D-erythrose 4-phosphate + beta-D-fructose 6-phosphate</text>
        <dbReference type="Rhea" id="RHEA:17053"/>
        <dbReference type="ChEBI" id="CHEBI:16897"/>
        <dbReference type="ChEBI" id="CHEBI:57483"/>
        <dbReference type="ChEBI" id="CHEBI:57634"/>
        <dbReference type="ChEBI" id="CHEBI:59776"/>
        <dbReference type="EC" id="2.2.1.2"/>
    </reaction>
</comment>
<comment type="pathway">
    <text evidence="1">Carbohydrate degradation; pentose phosphate pathway; D-glyceraldehyde 3-phosphate and beta-D-fructose 6-phosphate from D-ribose 5-phosphate and D-xylulose 5-phosphate (non-oxidative stage): step 2/3.</text>
</comment>
<comment type="subcellular location">
    <subcellularLocation>
        <location evidence="1">Cytoplasm</location>
    </subcellularLocation>
</comment>
<comment type="similarity">
    <text evidence="1">Belongs to the transaldolase family. Type 3B subfamily.</text>
</comment>
<dbReference type="EC" id="2.2.1.2" evidence="1"/>
<dbReference type="EMBL" id="CP000774">
    <property type="protein sequence ID" value="ABS63079.1"/>
    <property type="molecule type" value="Genomic_DNA"/>
</dbReference>
<dbReference type="RefSeq" id="WP_012110360.1">
    <property type="nucleotide sequence ID" value="NC_009719.1"/>
</dbReference>
<dbReference type="SMR" id="A7HT46"/>
<dbReference type="STRING" id="402881.Plav_1459"/>
<dbReference type="KEGG" id="pla:Plav_1459"/>
<dbReference type="eggNOG" id="COG0176">
    <property type="taxonomic scope" value="Bacteria"/>
</dbReference>
<dbReference type="HOGENOM" id="CLU_079764_0_0_5"/>
<dbReference type="OrthoDB" id="9807051at2"/>
<dbReference type="UniPathway" id="UPA00115">
    <property type="reaction ID" value="UER00414"/>
</dbReference>
<dbReference type="Proteomes" id="UP000006377">
    <property type="component" value="Chromosome"/>
</dbReference>
<dbReference type="GO" id="GO:0005737">
    <property type="term" value="C:cytoplasm"/>
    <property type="evidence" value="ECO:0007669"/>
    <property type="project" value="UniProtKB-SubCell"/>
</dbReference>
<dbReference type="GO" id="GO:0016832">
    <property type="term" value="F:aldehyde-lyase activity"/>
    <property type="evidence" value="ECO:0007669"/>
    <property type="project" value="InterPro"/>
</dbReference>
<dbReference type="GO" id="GO:0004801">
    <property type="term" value="F:transaldolase activity"/>
    <property type="evidence" value="ECO:0007669"/>
    <property type="project" value="UniProtKB-UniRule"/>
</dbReference>
<dbReference type="GO" id="GO:0005975">
    <property type="term" value="P:carbohydrate metabolic process"/>
    <property type="evidence" value="ECO:0007669"/>
    <property type="project" value="InterPro"/>
</dbReference>
<dbReference type="GO" id="GO:0006098">
    <property type="term" value="P:pentose-phosphate shunt"/>
    <property type="evidence" value="ECO:0007669"/>
    <property type="project" value="UniProtKB-UniRule"/>
</dbReference>
<dbReference type="CDD" id="cd00956">
    <property type="entry name" value="Transaldolase_FSA"/>
    <property type="match status" value="1"/>
</dbReference>
<dbReference type="FunFam" id="3.20.20.70:FF:000018">
    <property type="entry name" value="Probable transaldolase"/>
    <property type="match status" value="1"/>
</dbReference>
<dbReference type="Gene3D" id="3.20.20.70">
    <property type="entry name" value="Aldolase class I"/>
    <property type="match status" value="1"/>
</dbReference>
<dbReference type="HAMAP" id="MF_00494">
    <property type="entry name" value="Transaldolase_3b"/>
    <property type="match status" value="1"/>
</dbReference>
<dbReference type="InterPro" id="IPR013785">
    <property type="entry name" value="Aldolase_TIM"/>
</dbReference>
<dbReference type="InterPro" id="IPR001585">
    <property type="entry name" value="TAL/FSA"/>
</dbReference>
<dbReference type="InterPro" id="IPR022999">
    <property type="entry name" value="Transaldolase_3B"/>
</dbReference>
<dbReference type="InterPro" id="IPR004731">
    <property type="entry name" value="Transaldolase_3B/F6P_aldolase"/>
</dbReference>
<dbReference type="InterPro" id="IPR018225">
    <property type="entry name" value="Transaldolase_AS"/>
</dbReference>
<dbReference type="InterPro" id="IPR033919">
    <property type="entry name" value="TSA/FSA_arc/bac"/>
</dbReference>
<dbReference type="NCBIfam" id="TIGR00875">
    <property type="entry name" value="fsa_talC_mipB"/>
    <property type="match status" value="1"/>
</dbReference>
<dbReference type="PANTHER" id="PTHR10683:SF40">
    <property type="entry name" value="FRUCTOSE-6-PHOSPHATE ALDOLASE 1-RELATED"/>
    <property type="match status" value="1"/>
</dbReference>
<dbReference type="PANTHER" id="PTHR10683">
    <property type="entry name" value="TRANSALDOLASE"/>
    <property type="match status" value="1"/>
</dbReference>
<dbReference type="Pfam" id="PF00923">
    <property type="entry name" value="TAL_FSA"/>
    <property type="match status" value="1"/>
</dbReference>
<dbReference type="SUPFAM" id="SSF51569">
    <property type="entry name" value="Aldolase"/>
    <property type="match status" value="1"/>
</dbReference>
<dbReference type="PROSITE" id="PS01054">
    <property type="entry name" value="TRANSALDOLASE_1"/>
    <property type="match status" value="1"/>
</dbReference>
<proteinExistence type="inferred from homology"/>
<name>TAL_PARL1</name>
<feature type="chain" id="PRO_1000126337" description="Probable transaldolase">
    <location>
        <begin position="1"/>
        <end position="218"/>
    </location>
</feature>
<feature type="active site" description="Schiff-base intermediate with substrate" evidence="1">
    <location>
        <position position="83"/>
    </location>
</feature>
<reference key="1">
    <citation type="journal article" date="2011" name="Stand. Genomic Sci.">
        <title>Complete genome sequence of Parvibaculum lavamentivorans type strain (DS-1(T)).</title>
        <authorList>
            <person name="Schleheck D."/>
            <person name="Weiss M."/>
            <person name="Pitluck S."/>
            <person name="Bruce D."/>
            <person name="Land M.L."/>
            <person name="Han S."/>
            <person name="Saunders E."/>
            <person name="Tapia R."/>
            <person name="Detter C."/>
            <person name="Brettin T."/>
            <person name="Han J."/>
            <person name="Woyke T."/>
            <person name="Goodwin L."/>
            <person name="Pennacchio L."/>
            <person name="Nolan M."/>
            <person name="Cook A.M."/>
            <person name="Kjelleberg S."/>
            <person name="Thomas T."/>
        </authorList>
    </citation>
    <scope>NUCLEOTIDE SEQUENCE [LARGE SCALE GENOMIC DNA]</scope>
    <source>
        <strain>DS-1 / DSM 13023 / NCIMB 13966</strain>
    </source>
</reference>